<feature type="chain" id="PRO_0000086412" description="Myosin light chain kinase A">
    <location>
        <begin position="1"/>
        <end position="295"/>
    </location>
</feature>
<feature type="domain" description="Protein kinase" evidence="2">
    <location>
        <begin position="8"/>
        <end position="265"/>
    </location>
</feature>
<feature type="region of interest" description="Autoinhibitory domain">
    <location>
        <begin position="264"/>
        <end position="295"/>
    </location>
</feature>
<feature type="active site" description="Proton acceptor" evidence="2 3">
    <location>
        <position position="130"/>
    </location>
</feature>
<feature type="binding site" evidence="2">
    <location>
        <begin position="14"/>
        <end position="22"/>
    </location>
    <ligand>
        <name>ATP</name>
        <dbReference type="ChEBI" id="CHEBI:30616"/>
    </ligand>
</feature>
<feature type="binding site" evidence="2">
    <location>
        <position position="37"/>
    </location>
    <ligand>
        <name>ATP</name>
        <dbReference type="ChEBI" id="CHEBI:30616"/>
    </ligand>
</feature>
<feature type="modified residue" description="Phosphothreonine" evidence="4">
    <location>
        <position position="166"/>
    </location>
</feature>
<feature type="modified residue" description="Phosphothreonine" evidence="4">
    <location>
        <position position="289"/>
    </location>
</feature>
<feature type="mutagenesis site" description="Slight increase in phosphorylation and loss of mlcR phosphorylation." evidence="4">
    <original>T</original>
    <variation>A</variation>
    <location>
        <position position="166"/>
    </location>
</feature>
<feature type="mutagenesis site" description="Great increase in phosphorylation." evidence="4">
    <original>T</original>
    <variation>A</variation>
    <location>
        <position position="289"/>
    </location>
</feature>
<protein>
    <recommendedName>
        <fullName>Myosin light chain kinase A</fullName>
        <shortName evidence="5">MLCK-A</shortName>
        <ecNumber evidence="7">2.7.11.18</ecNumber>
    </recommendedName>
</protein>
<accession>P25323</accession>
<accession>Q54W26</accession>
<proteinExistence type="evidence at protein level"/>
<sequence length="295" mass="33407">MTEVEKIYEFKEELGRGAFSIVYLGENKQTKQRYAIKVINKSELGKDYEKNLKMEVDILKKVNHPNIIALKELFDTPEKLYLVMELVTGGELFDKIVEKGSYSEADAANLVKKIVSAVGYLHGLNIVHRDLKPENLLLKSKENHLEVAIADFGLSKIIGQTLVMQTACGTPSYVAPEVLNATGYDKEVDMWSIGVITYILLCGFPPFYGDTVPEIFEQIMEANYEFPEEYWGGISKEAKDFIGKLLVVDVSKRLNATNALNHPWLKSNNSNNTIDTVKMKEYIVERQKTQTKLVN</sequence>
<reference key="1">
    <citation type="journal article" date="1991" name="J. Biol. Chem.">
        <title>Characterization and bacterial expression of the Dictyostelium myosin light chain kinase cDNA. Identification of an autoinhibitory domain.</title>
        <authorList>
            <person name="Tan J.L."/>
            <person name="Spudich J.A."/>
        </authorList>
    </citation>
    <scope>NUCLEOTIDE SEQUENCE [MRNA]</scope>
    <source>
        <strain>AX3</strain>
    </source>
</reference>
<reference key="2">
    <citation type="submission" date="1996-08" db="EMBL/GenBank/DDBJ databases">
        <authorList>
            <person name="Spudich J.A."/>
        </authorList>
    </citation>
    <scope>SEQUENCE REVISION</scope>
</reference>
<reference key="3">
    <citation type="journal article" date="2005" name="Nature">
        <title>The genome of the social amoeba Dictyostelium discoideum.</title>
        <authorList>
            <person name="Eichinger L."/>
            <person name="Pachebat J.A."/>
            <person name="Gloeckner G."/>
            <person name="Rajandream M.A."/>
            <person name="Sucgang R."/>
            <person name="Berriman M."/>
            <person name="Song J."/>
            <person name="Olsen R."/>
            <person name="Szafranski K."/>
            <person name="Xu Q."/>
            <person name="Tunggal B."/>
            <person name="Kummerfeld S."/>
            <person name="Madera M."/>
            <person name="Konfortov B.A."/>
            <person name="Rivero F."/>
            <person name="Bankier A.T."/>
            <person name="Lehmann R."/>
            <person name="Hamlin N."/>
            <person name="Davies R."/>
            <person name="Gaudet P."/>
            <person name="Fey P."/>
            <person name="Pilcher K."/>
            <person name="Chen G."/>
            <person name="Saunders D."/>
            <person name="Sodergren E.J."/>
            <person name="Davis P."/>
            <person name="Kerhornou A."/>
            <person name="Nie X."/>
            <person name="Hall N."/>
            <person name="Anjard C."/>
            <person name="Hemphill L."/>
            <person name="Bason N."/>
            <person name="Farbrother P."/>
            <person name="Desany B."/>
            <person name="Just E."/>
            <person name="Morio T."/>
            <person name="Rost R."/>
            <person name="Churcher C.M."/>
            <person name="Cooper J."/>
            <person name="Haydock S."/>
            <person name="van Driessche N."/>
            <person name="Cronin A."/>
            <person name="Goodhead I."/>
            <person name="Muzny D.M."/>
            <person name="Mourier T."/>
            <person name="Pain A."/>
            <person name="Lu M."/>
            <person name="Harper D."/>
            <person name="Lindsay R."/>
            <person name="Hauser H."/>
            <person name="James K.D."/>
            <person name="Quiles M."/>
            <person name="Madan Babu M."/>
            <person name="Saito T."/>
            <person name="Buchrieser C."/>
            <person name="Wardroper A."/>
            <person name="Felder M."/>
            <person name="Thangavelu M."/>
            <person name="Johnson D."/>
            <person name="Knights A."/>
            <person name="Loulseged H."/>
            <person name="Mungall K.L."/>
            <person name="Oliver K."/>
            <person name="Price C."/>
            <person name="Quail M.A."/>
            <person name="Urushihara H."/>
            <person name="Hernandez J."/>
            <person name="Rabbinowitsch E."/>
            <person name="Steffen D."/>
            <person name="Sanders M."/>
            <person name="Ma J."/>
            <person name="Kohara Y."/>
            <person name="Sharp S."/>
            <person name="Simmonds M.N."/>
            <person name="Spiegler S."/>
            <person name="Tivey A."/>
            <person name="Sugano S."/>
            <person name="White B."/>
            <person name="Walker D."/>
            <person name="Woodward J.R."/>
            <person name="Winckler T."/>
            <person name="Tanaka Y."/>
            <person name="Shaulsky G."/>
            <person name="Schleicher M."/>
            <person name="Weinstock G.M."/>
            <person name="Rosenthal A."/>
            <person name="Cox E.C."/>
            <person name="Chisholm R.L."/>
            <person name="Gibbs R.A."/>
            <person name="Loomis W.F."/>
            <person name="Platzer M."/>
            <person name="Kay R.R."/>
            <person name="Williams J.G."/>
            <person name="Dear P.H."/>
            <person name="Noegel A.A."/>
            <person name="Barrell B.G."/>
            <person name="Kuspa A."/>
        </authorList>
    </citation>
    <scope>NUCLEOTIDE SEQUENCE [LARGE SCALE GENOMIC DNA]</scope>
    <source>
        <strain>AX4</strain>
    </source>
</reference>
<reference key="4">
    <citation type="journal article" date="1990" name="J. Biol. Chem.">
        <title>Dictyostelium myosin light chain kinase. Purification and characterization.</title>
        <authorList>
            <person name="Tan J.L."/>
            <person name="Spudich J.A."/>
        </authorList>
    </citation>
    <scope>PARTIAL PROTEIN SEQUENCE</scope>
    <scope>AUTOPHOSPHORYLATION</scope>
    <source>
        <strain>AX3</strain>
    </source>
</reference>
<reference key="5">
    <citation type="journal article" date="2006" name="FEBS Lett.">
        <title>Myosin light chain kinase A is activated by cGMP-dependent and cGMP-independent pathways.</title>
        <authorList>
            <person name="Goldberg J.M."/>
            <person name="Wolpin E.S."/>
            <person name="Bosgraaf L."/>
            <person name="Clarkson B.K."/>
            <person name="Van Haastert P.J.M."/>
            <person name="Smith J.L."/>
        </authorList>
    </citation>
    <scope>PHOSPHORYLATION AT THR-166 AND THR-289</scope>
    <scope>MUTAGENESIS OF THR-166 AND THR-289</scope>
    <scope>FUNCTION</scope>
    <scope>CATALYTIC ACTIVITY</scope>
</reference>
<name>MYLKA_DICDI</name>
<keyword id="KW-0067">ATP-binding</keyword>
<keyword id="KW-0903">Direct protein sequencing</keyword>
<keyword id="KW-0418">Kinase</keyword>
<keyword id="KW-0547">Nucleotide-binding</keyword>
<keyword id="KW-0597">Phosphoprotein</keyword>
<keyword id="KW-1185">Reference proteome</keyword>
<keyword id="KW-0723">Serine/threonine-protein kinase</keyword>
<keyword id="KW-0808">Transferase</keyword>
<organism>
    <name type="scientific">Dictyostelium discoideum</name>
    <name type="common">Social amoeba</name>
    <dbReference type="NCBI Taxonomy" id="44689"/>
    <lineage>
        <taxon>Eukaryota</taxon>
        <taxon>Amoebozoa</taxon>
        <taxon>Evosea</taxon>
        <taxon>Eumycetozoa</taxon>
        <taxon>Dictyostelia</taxon>
        <taxon>Dictyosteliales</taxon>
        <taxon>Dictyosteliaceae</taxon>
        <taxon>Dictyostelium</taxon>
    </lineage>
</organism>
<comment type="function">
    <text evidence="1 4 5">Phosphorylates a specific serine in the N-terminus of a myosin light chain (By similarity). Phosphorylates regulatory myosin light chain (mlcR) during chemotaxis (PubMed:16546177). mlcR phosphorylation increases the motility and actin-activated ATPase activity of myosin, contributing to chemotaxis (PubMed:16546177).</text>
</comment>
<comment type="catalytic activity">
    <reaction evidence="7">
        <text>L-seryl-[myosin light chain] + ATP = O-phospho-L-seryl-[myosin light chain] + ADP + H(+)</text>
        <dbReference type="Rhea" id="RHEA:22004"/>
        <dbReference type="Rhea" id="RHEA-COMP:13684"/>
        <dbReference type="Rhea" id="RHEA-COMP:13685"/>
        <dbReference type="ChEBI" id="CHEBI:15378"/>
        <dbReference type="ChEBI" id="CHEBI:29999"/>
        <dbReference type="ChEBI" id="CHEBI:30616"/>
        <dbReference type="ChEBI" id="CHEBI:83421"/>
        <dbReference type="ChEBI" id="CHEBI:456216"/>
        <dbReference type="EC" id="2.7.11.18"/>
    </reaction>
    <physiologicalReaction direction="left-to-right" evidence="7">
        <dbReference type="Rhea" id="RHEA:22005"/>
    </physiologicalReaction>
</comment>
<comment type="catalytic activity">
    <reaction evidence="7">
        <text>L-threonyl-[myosin light chain] + ATP = O-phospho-L-threonyl-[myosin light chain] + ADP + H(+)</text>
        <dbReference type="Rhea" id="RHEA:53900"/>
        <dbReference type="Rhea" id="RHEA-COMP:13686"/>
        <dbReference type="Rhea" id="RHEA-COMP:13687"/>
        <dbReference type="ChEBI" id="CHEBI:15378"/>
        <dbReference type="ChEBI" id="CHEBI:30013"/>
        <dbReference type="ChEBI" id="CHEBI:30616"/>
        <dbReference type="ChEBI" id="CHEBI:61977"/>
        <dbReference type="ChEBI" id="CHEBI:456216"/>
        <dbReference type="EC" id="2.7.11.18"/>
    </reaction>
    <physiologicalReaction direction="left-to-right" evidence="7">
        <dbReference type="Rhea" id="RHEA:53901"/>
    </physiologicalReaction>
</comment>
<comment type="activity regulation">
    <text>Possesses an autoinhibitory domain. Autophosphorylation appears to increase the enzymatic activity. Activation is gbdC-dependent. Does not have a calmodulin-binding domain.</text>
</comment>
<comment type="PTM">
    <text evidence="4">Autophosphorylated. Transiently phosphorylated on Thr-166 and Thr-289. This phosphorylation is gbpC-dependent.</text>
</comment>
<comment type="similarity">
    <text evidence="6">Belongs to the protein kinase superfamily. CAMK Ser/Thr protein kinase family. CaMK subfamily.</text>
</comment>
<dbReference type="EC" id="2.7.11.18" evidence="7"/>
<dbReference type="EMBL" id="M64176">
    <property type="protein sequence ID" value="AAB06337.1"/>
    <property type="molecule type" value="mRNA"/>
</dbReference>
<dbReference type="EMBL" id="AAFI02000035">
    <property type="protein sequence ID" value="EAL67434.1"/>
    <property type="molecule type" value="Genomic_DNA"/>
</dbReference>
<dbReference type="PIR" id="A40811">
    <property type="entry name" value="A40811"/>
</dbReference>
<dbReference type="RefSeq" id="XP_641424.1">
    <property type="nucleotide sequence ID" value="XM_636332.1"/>
</dbReference>
<dbReference type="SMR" id="P25323"/>
<dbReference type="DIP" id="DIP-153N"/>
<dbReference type="FunCoup" id="P25323">
    <property type="interactions" value="167"/>
</dbReference>
<dbReference type="STRING" id="44689.P25323"/>
<dbReference type="iPTMnet" id="P25323"/>
<dbReference type="PaxDb" id="44689-DDB0214815"/>
<dbReference type="EnsemblProtists" id="EAL67434">
    <property type="protein sequence ID" value="EAL67434"/>
    <property type="gene ID" value="DDB_G0279925"/>
</dbReference>
<dbReference type="GeneID" id="8622308"/>
<dbReference type="KEGG" id="ddi:DDB_G0279925"/>
<dbReference type="dictyBase" id="DDB_G0279925">
    <property type="gene designation" value="mlkA"/>
</dbReference>
<dbReference type="VEuPathDB" id="AmoebaDB:DDB_G0279925"/>
<dbReference type="eggNOG" id="KOG0032">
    <property type="taxonomic scope" value="Eukaryota"/>
</dbReference>
<dbReference type="HOGENOM" id="CLU_000288_63_0_1"/>
<dbReference type="InParanoid" id="P25323"/>
<dbReference type="OMA" id="NEPKFMT"/>
<dbReference type="PhylomeDB" id="P25323"/>
<dbReference type="BRENDA" id="2.7.11.18">
    <property type="organism ID" value="1939"/>
</dbReference>
<dbReference type="PRO" id="PR:P25323"/>
<dbReference type="Proteomes" id="UP000002195">
    <property type="component" value="Chromosome 3"/>
</dbReference>
<dbReference type="GO" id="GO:0005737">
    <property type="term" value="C:cytoplasm"/>
    <property type="evidence" value="ECO:0000314"/>
    <property type="project" value="dictyBase"/>
</dbReference>
<dbReference type="GO" id="GO:0005524">
    <property type="term" value="F:ATP binding"/>
    <property type="evidence" value="ECO:0007669"/>
    <property type="project" value="UniProtKB-KW"/>
</dbReference>
<dbReference type="GO" id="GO:0000146">
    <property type="term" value="F:microfilament motor activity"/>
    <property type="evidence" value="ECO:0000314"/>
    <property type="project" value="dictyBase"/>
</dbReference>
<dbReference type="GO" id="GO:0004687">
    <property type="term" value="F:myosin light chain kinase activity"/>
    <property type="evidence" value="ECO:0000314"/>
    <property type="project" value="dictyBase"/>
</dbReference>
<dbReference type="GO" id="GO:0004674">
    <property type="term" value="F:protein serine/threonine kinase activity"/>
    <property type="evidence" value="ECO:0000314"/>
    <property type="project" value="dictyBase"/>
</dbReference>
<dbReference type="GO" id="GO:0140582">
    <property type="term" value="P:adenylate cyclase-activating G protein-coupled cAMP receptor signaling pathway"/>
    <property type="evidence" value="ECO:0000314"/>
    <property type="project" value="dictyBase"/>
</dbReference>
<dbReference type="GO" id="GO:0019934">
    <property type="term" value="P:cGMP-mediated signaling"/>
    <property type="evidence" value="ECO:0000314"/>
    <property type="project" value="dictyBase"/>
</dbReference>
<dbReference type="GO" id="GO:0000281">
    <property type="term" value="P:mitotic cytokinesis"/>
    <property type="evidence" value="ECO:0000315"/>
    <property type="project" value="dictyBase"/>
</dbReference>
<dbReference type="GO" id="GO:0050920">
    <property type="term" value="P:regulation of chemotaxis"/>
    <property type="evidence" value="ECO:0000315"/>
    <property type="project" value="dictyBase"/>
</dbReference>
<dbReference type="GO" id="GO:0007165">
    <property type="term" value="P:signal transduction"/>
    <property type="evidence" value="ECO:0000318"/>
    <property type="project" value="GO_Central"/>
</dbReference>
<dbReference type="CDD" id="cd05117">
    <property type="entry name" value="STKc_CAMK"/>
    <property type="match status" value="1"/>
</dbReference>
<dbReference type="FunFam" id="3.30.200.20:FF:000315">
    <property type="entry name" value="Calcium-dependent protein kinase 3"/>
    <property type="match status" value="1"/>
</dbReference>
<dbReference type="FunFam" id="1.10.510.10:FF:000026">
    <property type="entry name" value="Calcium/calmodulin-dependent protein kinase type 1"/>
    <property type="match status" value="1"/>
</dbReference>
<dbReference type="Gene3D" id="1.10.510.10">
    <property type="entry name" value="Transferase(Phosphotransferase) domain 1"/>
    <property type="match status" value="1"/>
</dbReference>
<dbReference type="InterPro" id="IPR011009">
    <property type="entry name" value="Kinase-like_dom_sf"/>
</dbReference>
<dbReference type="InterPro" id="IPR000719">
    <property type="entry name" value="Prot_kinase_dom"/>
</dbReference>
<dbReference type="InterPro" id="IPR017441">
    <property type="entry name" value="Protein_kinase_ATP_BS"/>
</dbReference>
<dbReference type="InterPro" id="IPR008271">
    <property type="entry name" value="Ser/Thr_kinase_AS"/>
</dbReference>
<dbReference type="PANTHER" id="PTHR24347">
    <property type="entry name" value="SERINE/THREONINE-PROTEIN KINASE"/>
    <property type="match status" value="1"/>
</dbReference>
<dbReference type="Pfam" id="PF00069">
    <property type="entry name" value="Pkinase"/>
    <property type="match status" value="1"/>
</dbReference>
<dbReference type="SMART" id="SM00220">
    <property type="entry name" value="S_TKc"/>
    <property type="match status" value="1"/>
</dbReference>
<dbReference type="SUPFAM" id="SSF56112">
    <property type="entry name" value="Protein kinase-like (PK-like)"/>
    <property type="match status" value="1"/>
</dbReference>
<dbReference type="PROSITE" id="PS00107">
    <property type="entry name" value="PROTEIN_KINASE_ATP"/>
    <property type="match status" value="1"/>
</dbReference>
<dbReference type="PROSITE" id="PS50011">
    <property type="entry name" value="PROTEIN_KINASE_DOM"/>
    <property type="match status" value="1"/>
</dbReference>
<dbReference type="PROSITE" id="PS00108">
    <property type="entry name" value="PROTEIN_KINASE_ST"/>
    <property type="match status" value="1"/>
</dbReference>
<evidence type="ECO:0000250" key="1"/>
<evidence type="ECO:0000255" key="2">
    <source>
        <dbReference type="PROSITE-ProRule" id="PRU00159"/>
    </source>
</evidence>
<evidence type="ECO:0000255" key="3">
    <source>
        <dbReference type="PROSITE-ProRule" id="PRU10027"/>
    </source>
</evidence>
<evidence type="ECO:0000269" key="4">
    <source>
    </source>
</evidence>
<evidence type="ECO:0000303" key="5">
    <source>
    </source>
</evidence>
<evidence type="ECO:0000305" key="6"/>
<evidence type="ECO:0000305" key="7">
    <source>
    </source>
</evidence>
<gene>
    <name type="primary">mlkA</name>
    <name type="ORF">DDB_G0279925</name>
</gene>